<proteinExistence type="inferred from homology"/>
<protein>
    <recommendedName>
        <fullName>Nuclear membrane organization protein apq12</fullName>
    </recommendedName>
</protein>
<organism>
    <name type="scientific">Schizosaccharomyces pombe (strain 972 / ATCC 24843)</name>
    <name type="common">Fission yeast</name>
    <dbReference type="NCBI Taxonomy" id="284812"/>
    <lineage>
        <taxon>Eukaryota</taxon>
        <taxon>Fungi</taxon>
        <taxon>Dikarya</taxon>
        <taxon>Ascomycota</taxon>
        <taxon>Taphrinomycotina</taxon>
        <taxon>Schizosaccharomycetes</taxon>
        <taxon>Schizosaccharomycetales</taxon>
        <taxon>Schizosaccharomycetaceae</taxon>
        <taxon>Schizosaccharomyces</taxon>
    </lineage>
</organism>
<gene>
    <name type="primary">apq12</name>
    <name type="ORF">SPBC428.04</name>
</gene>
<reference key="1">
    <citation type="journal article" date="2002" name="Nature">
        <title>The genome sequence of Schizosaccharomyces pombe.</title>
        <authorList>
            <person name="Wood V."/>
            <person name="Gwilliam R."/>
            <person name="Rajandream M.A."/>
            <person name="Lyne M.H."/>
            <person name="Lyne R."/>
            <person name="Stewart A."/>
            <person name="Sgouros J.G."/>
            <person name="Peat N."/>
            <person name="Hayles J."/>
            <person name="Baker S.G."/>
            <person name="Basham D."/>
            <person name="Bowman S."/>
            <person name="Brooks K."/>
            <person name="Brown D."/>
            <person name="Brown S."/>
            <person name="Chillingworth T."/>
            <person name="Churcher C.M."/>
            <person name="Collins M."/>
            <person name="Connor R."/>
            <person name="Cronin A."/>
            <person name="Davis P."/>
            <person name="Feltwell T."/>
            <person name="Fraser A."/>
            <person name="Gentles S."/>
            <person name="Goble A."/>
            <person name="Hamlin N."/>
            <person name="Harris D.E."/>
            <person name="Hidalgo J."/>
            <person name="Hodgson G."/>
            <person name="Holroyd S."/>
            <person name="Hornsby T."/>
            <person name="Howarth S."/>
            <person name="Huckle E.J."/>
            <person name="Hunt S."/>
            <person name="Jagels K."/>
            <person name="James K.D."/>
            <person name="Jones L."/>
            <person name="Jones M."/>
            <person name="Leather S."/>
            <person name="McDonald S."/>
            <person name="McLean J."/>
            <person name="Mooney P."/>
            <person name="Moule S."/>
            <person name="Mungall K.L."/>
            <person name="Murphy L.D."/>
            <person name="Niblett D."/>
            <person name="Odell C."/>
            <person name="Oliver K."/>
            <person name="O'Neil S."/>
            <person name="Pearson D."/>
            <person name="Quail M.A."/>
            <person name="Rabbinowitsch E."/>
            <person name="Rutherford K.M."/>
            <person name="Rutter S."/>
            <person name="Saunders D."/>
            <person name="Seeger K."/>
            <person name="Sharp S."/>
            <person name="Skelton J."/>
            <person name="Simmonds M.N."/>
            <person name="Squares R."/>
            <person name="Squares S."/>
            <person name="Stevens K."/>
            <person name="Taylor K."/>
            <person name="Taylor R.G."/>
            <person name="Tivey A."/>
            <person name="Walsh S.V."/>
            <person name="Warren T."/>
            <person name="Whitehead S."/>
            <person name="Woodward J.R."/>
            <person name="Volckaert G."/>
            <person name="Aert R."/>
            <person name="Robben J."/>
            <person name="Grymonprez B."/>
            <person name="Weltjens I."/>
            <person name="Vanstreels E."/>
            <person name="Rieger M."/>
            <person name="Schaefer M."/>
            <person name="Mueller-Auer S."/>
            <person name="Gabel C."/>
            <person name="Fuchs M."/>
            <person name="Duesterhoeft A."/>
            <person name="Fritzc C."/>
            <person name="Holzer E."/>
            <person name="Moestl D."/>
            <person name="Hilbert H."/>
            <person name="Borzym K."/>
            <person name="Langer I."/>
            <person name="Beck A."/>
            <person name="Lehrach H."/>
            <person name="Reinhardt R."/>
            <person name="Pohl T.M."/>
            <person name="Eger P."/>
            <person name="Zimmermann W."/>
            <person name="Wedler H."/>
            <person name="Wambutt R."/>
            <person name="Purnelle B."/>
            <person name="Goffeau A."/>
            <person name="Cadieu E."/>
            <person name="Dreano S."/>
            <person name="Gloux S."/>
            <person name="Lelaure V."/>
            <person name="Mottier S."/>
            <person name="Galibert F."/>
            <person name="Aves S.J."/>
            <person name="Xiang Z."/>
            <person name="Hunt C."/>
            <person name="Moore K."/>
            <person name="Hurst S.M."/>
            <person name="Lucas M."/>
            <person name="Rochet M."/>
            <person name="Gaillardin C."/>
            <person name="Tallada V.A."/>
            <person name="Garzon A."/>
            <person name="Thode G."/>
            <person name="Daga R.R."/>
            <person name="Cruzado L."/>
            <person name="Jimenez J."/>
            <person name="Sanchez M."/>
            <person name="del Rey F."/>
            <person name="Benito J."/>
            <person name="Dominguez A."/>
            <person name="Revuelta J.L."/>
            <person name="Moreno S."/>
            <person name="Armstrong J."/>
            <person name="Forsburg S.L."/>
            <person name="Cerutti L."/>
            <person name="Lowe T."/>
            <person name="McCombie W.R."/>
            <person name="Paulsen I."/>
            <person name="Potashkin J."/>
            <person name="Shpakovski G.V."/>
            <person name="Ussery D."/>
            <person name="Barrell B.G."/>
            <person name="Nurse P."/>
        </authorList>
    </citation>
    <scope>NUCLEOTIDE SEQUENCE [LARGE SCALE GENOMIC DNA]</scope>
    <source>
        <strain>972 / ATCC 24843</strain>
    </source>
</reference>
<reference key="2">
    <citation type="journal article" date="2006" name="Nat. Biotechnol.">
        <title>ORFeome cloning and global analysis of protein localization in the fission yeast Schizosaccharomyces pombe.</title>
        <authorList>
            <person name="Matsuyama A."/>
            <person name="Arai R."/>
            <person name="Yashiroda Y."/>
            <person name="Shirai A."/>
            <person name="Kamata A."/>
            <person name="Sekido S."/>
            <person name="Kobayashi Y."/>
            <person name="Hashimoto A."/>
            <person name="Hamamoto M."/>
            <person name="Hiraoka Y."/>
            <person name="Horinouchi S."/>
            <person name="Yoshida M."/>
        </authorList>
    </citation>
    <scope>SUBCELLULAR LOCATION [LARGE SCALE ANALYSIS]</scope>
</reference>
<evidence type="ECO:0000250" key="1"/>
<evidence type="ECO:0000255" key="2"/>
<evidence type="ECO:0000269" key="3">
    <source>
    </source>
</evidence>
<evidence type="ECO:0000305" key="4"/>
<name>APQ12_SCHPO</name>
<keyword id="KW-0256">Endoplasmic reticulum</keyword>
<keyword id="KW-0472">Membrane</keyword>
<keyword id="KW-0509">mRNA transport</keyword>
<keyword id="KW-0539">Nucleus</keyword>
<keyword id="KW-1185">Reference proteome</keyword>
<keyword id="KW-0812">Transmembrane</keyword>
<keyword id="KW-1133">Transmembrane helix</keyword>
<keyword id="KW-0813">Transport</keyword>
<comment type="function">
    <text evidence="1">Involved in the regulation of lipid homeostasis in the endoplasmic reticulum, thereby impacting nuclear pore complex biogenesis and localization, and nucleocytoplasmic mRNA transport.</text>
</comment>
<comment type="subcellular location">
    <subcellularLocation>
        <location evidence="1">Nucleus membrane</location>
        <topology evidence="1">Multi-pass membrane protein</topology>
    </subcellularLocation>
    <subcellularLocation>
        <location evidence="3">Endoplasmic reticulum membrane</location>
        <topology evidence="3">Multi-pass membrane protein</topology>
    </subcellularLocation>
</comment>
<comment type="similarity">
    <text evidence="4">Belongs to the APQ12 family.</text>
</comment>
<accession>O94353</accession>
<sequence length="115" mass="12762">MSLTSVLWNFVAKLAVDHGLNTNPDQVFQTVENVGKSFEKYETSFLKSLFNGNLGLSLPSAINILTLIIVLYFSLVIVNKTTSIALALFKTLAVISFFLLIGCLFAYWFINNGSF</sequence>
<feature type="chain" id="PRO_0000304062" description="Nuclear membrane organization protein apq12">
    <location>
        <begin position="1"/>
        <end position="115"/>
    </location>
</feature>
<feature type="transmembrane region" description="Helical" evidence="2">
    <location>
        <begin position="58"/>
        <end position="78"/>
    </location>
</feature>
<feature type="transmembrane region" description="Helical" evidence="2">
    <location>
        <begin position="91"/>
        <end position="111"/>
    </location>
</feature>
<dbReference type="EMBL" id="CU329671">
    <property type="protein sequence ID" value="CAA22279.1"/>
    <property type="molecule type" value="Genomic_DNA"/>
</dbReference>
<dbReference type="PIR" id="T40456">
    <property type="entry name" value="T40456"/>
</dbReference>
<dbReference type="RefSeq" id="NP_595182.1">
    <property type="nucleotide sequence ID" value="NM_001021090.2"/>
</dbReference>
<dbReference type="SMR" id="O94353"/>
<dbReference type="BioGRID" id="277524">
    <property type="interactions" value="72"/>
</dbReference>
<dbReference type="STRING" id="284812.O94353"/>
<dbReference type="iPTMnet" id="O94353"/>
<dbReference type="PaxDb" id="4896-SPBC428.04.1"/>
<dbReference type="EnsemblFungi" id="SPBC428.04.1">
    <property type="protein sequence ID" value="SPBC428.04.1:pep"/>
    <property type="gene ID" value="SPBC428.04"/>
</dbReference>
<dbReference type="GeneID" id="2541009"/>
<dbReference type="KEGG" id="spo:2541009"/>
<dbReference type="PomBase" id="SPBC428.04">
    <property type="gene designation" value="apq12"/>
</dbReference>
<dbReference type="VEuPathDB" id="FungiDB:SPBC428.04"/>
<dbReference type="HOGENOM" id="CLU_2134992_0_0_1"/>
<dbReference type="InParanoid" id="O94353"/>
<dbReference type="OMA" id="AKYMIDY"/>
<dbReference type="PRO" id="PR:O94353"/>
<dbReference type="Proteomes" id="UP000002485">
    <property type="component" value="Chromosome II"/>
</dbReference>
<dbReference type="GO" id="GO:0005783">
    <property type="term" value="C:endoplasmic reticulum"/>
    <property type="evidence" value="ECO:0007005"/>
    <property type="project" value="PomBase"/>
</dbReference>
<dbReference type="GO" id="GO:0005789">
    <property type="term" value="C:endoplasmic reticulum membrane"/>
    <property type="evidence" value="ECO:0007669"/>
    <property type="project" value="UniProtKB-SubCell"/>
</dbReference>
<dbReference type="GO" id="GO:0140599">
    <property type="term" value="C:mitotic nuclear bridge midzone membrane domain"/>
    <property type="evidence" value="ECO:0000314"/>
    <property type="project" value="PomBase"/>
</dbReference>
<dbReference type="GO" id="GO:0005635">
    <property type="term" value="C:nuclear envelope"/>
    <property type="evidence" value="ECO:0000266"/>
    <property type="project" value="PomBase"/>
</dbReference>
<dbReference type="GO" id="GO:0031965">
    <property type="term" value="C:nuclear membrane"/>
    <property type="evidence" value="ECO:0007669"/>
    <property type="project" value="UniProtKB-SubCell"/>
</dbReference>
<dbReference type="GO" id="GO:0042175">
    <property type="term" value="C:nuclear outer membrane-endoplasmic reticulum membrane network"/>
    <property type="evidence" value="ECO:0000314"/>
    <property type="project" value="PomBase"/>
</dbReference>
<dbReference type="GO" id="GO:0097038">
    <property type="term" value="C:perinuclear endoplasmic reticulum"/>
    <property type="evidence" value="ECO:0000314"/>
    <property type="project" value="PomBase"/>
</dbReference>
<dbReference type="GO" id="GO:0006643">
    <property type="term" value="P:membrane lipid metabolic process"/>
    <property type="evidence" value="ECO:0000315"/>
    <property type="project" value="PomBase"/>
</dbReference>
<dbReference type="GO" id="GO:0007077">
    <property type="term" value="P:mitotic nuclear membrane disassembly"/>
    <property type="evidence" value="ECO:0000315"/>
    <property type="project" value="PomBase"/>
</dbReference>
<dbReference type="GO" id="GO:0051028">
    <property type="term" value="P:mRNA transport"/>
    <property type="evidence" value="ECO:0007669"/>
    <property type="project" value="UniProtKB-KW"/>
</dbReference>
<dbReference type="GO" id="GO:0006998">
    <property type="term" value="P:nuclear envelope organization"/>
    <property type="evidence" value="ECO:0000315"/>
    <property type="project" value="PomBase"/>
</dbReference>
<dbReference type="InterPro" id="IPR024316">
    <property type="entry name" value="APQ12"/>
</dbReference>
<dbReference type="Pfam" id="PF12716">
    <property type="entry name" value="Apq12"/>
    <property type="match status" value="1"/>
</dbReference>